<comment type="subcellular location">
    <subcellularLocation>
        <location evidence="1">Spore core</location>
    </subcellularLocation>
</comment>
<comment type="induction">
    <text evidence="1">Expressed only in the forespore compartment of sporulating cells.</text>
</comment>
<comment type="similarity">
    <text evidence="1">Belongs to the SspI family.</text>
</comment>
<keyword id="KW-0749">Sporulation</keyword>
<reference key="1">
    <citation type="submission" date="2008-10" db="EMBL/GenBank/DDBJ databases">
        <title>Genome sequence of Bacillus cereus G9842.</title>
        <authorList>
            <person name="Dodson R.J."/>
            <person name="Durkin A.S."/>
            <person name="Rosovitz M.J."/>
            <person name="Rasko D.A."/>
            <person name="Hoffmaster A."/>
            <person name="Ravel J."/>
            <person name="Sutton G."/>
        </authorList>
    </citation>
    <scope>NUCLEOTIDE SEQUENCE [LARGE SCALE GENOMIC DNA]</scope>
    <source>
        <strain>G9842</strain>
    </source>
</reference>
<organism>
    <name type="scientific">Bacillus cereus (strain G9842)</name>
    <dbReference type="NCBI Taxonomy" id="405531"/>
    <lineage>
        <taxon>Bacteria</taxon>
        <taxon>Bacillati</taxon>
        <taxon>Bacillota</taxon>
        <taxon>Bacilli</taxon>
        <taxon>Bacillales</taxon>
        <taxon>Bacillaceae</taxon>
        <taxon>Bacillus</taxon>
        <taxon>Bacillus cereus group</taxon>
    </lineage>
</organism>
<dbReference type="EMBL" id="CP001186">
    <property type="protein sequence ID" value="ACK94828.1"/>
    <property type="molecule type" value="Genomic_DNA"/>
</dbReference>
<dbReference type="RefSeq" id="WP_000009509.1">
    <property type="nucleotide sequence ID" value="NC_011772.1"/>
</dbReference>
<dbReference type="SMR" id="B7IJW2"/>
<dbReference type="GeneID" id="92798850"/>
<dbReference type="KEGG" id="bcg:BCG9842_B0565"/>
<dbReference type="HOGENOM" id="CLU_188877_0_0_9"/>
<dbReference type="Proteomes" id="UP000006744">
    <property type="component" value="Chromosome"/>
</dbReference>
<dbReference type="GO" id="GO:0030436">
    <property type="term" value="P:asexual sporulation"/>
    <property type="evidence" value="ECO:0007669"/>
    <property type="project" value="UniProtKB-UniRule"/>
</dbReference>
<dbReference type="GO" id="GO:0030435">
    <property type="term" value="P:sporulation resulting in formation of a cellular spore"/>
    <property type="evidence" value="ECO:0007669"/>
    <property type="project" value="UniProtKB-KW"/>
</dbReference>
<dbReference type="HAMAP" id="MF_00669">
    <property type="entry name" value="SspI"/>
    <property type="match status" value="1"/>
</dbReference>
<dbReference type="InterPro" id="IPR017525">
    <property type="entry name" value="SspI"/>
</dbReference>
<dbReference type="NCBIfam" id="TIGR03092">
    <property type="entry name" value="SASP_sspI"/>
    <property type="match status" value="1"/>
</dbReference>
<dbReference type="Pfam" id="PF14098">
    <property type="entry name" value="SSPI"/>
    <property type="match status" value="1"/>
</dbReference>
<accession>B7IJW2</accession>
<protein>
    <recommendedName>
        <fullName evidence="1">Small, acid-soluble spore protein I</fullName>
        <shortName evidence="1">SASP I</shortName>
    </recommendedName>
</protein>
<feature type="chain" id="PRO_1000131503" description="Small, acid-soluble spore protein I">
    <location>
        <begin position="1"/>
        <end position="69"/>
    </location>
</feature>
<sequence length="69" mass="7673">MSFNLRGAVLANVSGNSQDQLQETIVDAIQSGEEKMLPGLGVLFEVIWKNADENEKHEMLETLEQGLKK</sequence>
<name>SSPI_BACC2</name>
<evidence type="ECO:0000255" key="1">
    <source>
        <dbReference type="HAMAP-Rule" id="MF_00669"/>
    </source>
</evidence>
<gene>
    <name evidence="1" type="primary">sspI</name>
    <name type="ordered locus">BCG9842_B0565</name>
</gene>
<proteinExistence type="inferred from homology"/>